<accession>Q3ZCT8</accession>
<accession>B5MCC6</accession>
<accession>Q6ZRK1</accession>
<name>KBTBC_HUMAN</name>
<evidence type="ECO:0000255" key="1">
    <source>
        <dbReference type="PROSITE-ProRule" id="PRU00037"/>
    </source>
</evidence>
<evidence type="ECO:0000303" key="2">
    <source>
    </source>
</evidence>
<evidence type="ECO:0000305" key="3"/>
<evidence type="ECO:0007829" key="4">
    <source>
        <dbReference type="PDB" id="7QZQ"/>
    </source>
</evidence>
<reference key="1">
    <citation type="journal article" date="2004" name="Nat. Genet.">
        <title>Complete sequencing and characterization of 21,243 full-length human cDNAs.</title>
        <authorList>
            <person name="Ota T."/>
            <person name="Suzuki Y."/>
            <person name="Nishikawa T."/>
            <person name="Otsuki T."/>
            <person name="Sugiyama T."/>
            <person name="Irie R."/>
            <person name="Wakamatsu A."/>
            <person name="Hayashi K."/>
            <person name="Sato H."/>
            <person name="Nagai K."/>
            <person name="Kimura K."/>
            <person name="Makita H."/>
            <person name="Sekine M."/>
            <person name="Obayashi M."/>
            <person name="Nishi T."/>
            <person name="Shibahara T."/>
            <person name="Tanaka T."/>
            <person name="Ishii S."/>
            <person name="Yamamoto J."/>
            <person name="Saito K."/>
            <person name="Kawai Y."/>
            <person name="Isono Y."/>
            <person name="Nakamura Y."/>
            <person name="Nagahari K."/>
            <person name="Murakami K."/>
            <person name="Yasuda T."/>
            <person name="Iwayanagi T."/>
            <person name="Wagatsuma M."/>
            <person name="Shiratori A."/>
            <person name="Sudo H."/>
            <person name="Hosoiri T."/>
            <person name="Kaku Y."/>
            <person name="Kodaira H."/>
            <person name="Kondo H."/>
            <person name="Sugawara M."/>
            <person name="Takahashi M."/>
            <person name="Kanda K."/>
            <person name="Yokoi T."/>
            <person name="Furuya T."/>
            <person name="Kikkawa E."/>
            <person name="Omura Y."/>
            <person name="Abe K."/>
            <person name="Kamihara K."/>
            <person name="Katsuta N."/>
            <person name="Sato K."/>
            <person name="Tanikawa M."/>
            <person name="Yamazaki M."/>
            <person name="Ninomiya K."/>
            <person name="Ishibashi T."/>
            <person name="Yamashita H."/>
            <person name="Murakawa K."/>
            <person name="Fujimori K."/>
            <person name="Tanai H."/>
            <person name="Kimata M."/>
            <person name="Watanabe M."/>
            <person name="Hiraoka S."/>
            <person name="Chiba Y."/>
            <person name="Ishida S."/>
            <person name="Ono Y."/>
            <person name="Takiguchi S."/>
            <person name="Watanabe S."/>
            <person name="Yosida M."/>
            <person name="Hotuta T."/>
            <person name="Kusano J."/>
            <person name="Kanehori K."/>
            <person name="Takahashi-Fujii A."/>
            <person name="Hara H."/>
            <person name="Tanase T.-O."/>
            <person name="Nomura Y."/>
            <person name="Togiya S."/>
            <person name="Komai F."/>
            <person name="Hara R."/>
            <person name="Takeuchi K."/>
            <person name="Arita M."/>
            <person name="Imose N."/>
            <person name="Musashino K."/>
            <person name="Yuuki H."/>
            <person name="Oshima A."/>
            <person name="Sasaki N."/>
            <person name="Aotsuka S."/>
            <person name="Yoshikawa Y."/>
            <person name="Matsunawa H."/>
            <person name="Ichihara T."/>
            <person name="Shiohata N."/>
            <person name="Sano S."/>
            <person name="Moriya S."/>
            <person name="Momiyama H."/>
            <person name="Satoh N."/>
            <person name="Takami S."/>
            <person name="Terashima Y."/>
            <person name="Suzuki O."/>
            <person name="Nakagawa S."/>
            <person name="Senoh A."/>
            <person name="Mizoguchi H."/>
            <person name="Goto Y."/>
            <person name="Shimizu F."/>
            <person name="Wakebe H."/>
            <person name="Hishigaki H."/>
            <person name="Watanabe T."/>
            <person name="Sugiyama A."/>
            <person name="Takemoto M."/>
            <person name="Kawakami B."/>
            <person name="Yamazaki M."/>
            <person name="Watanabe K."/>
            <person name="Kumagai A."/>
            <person name="Itakura S."/>
            <person name="Fukuzumi Y."/>
            <person name="Fujimori Y."/>
            <person name="Komiyama M."/>
            <person name="Tashiro H."/>
            <person name="Tanigami A."/>
            <person name="Fujiwara T."/>
            <person name="Ono T."/>
            <person name="Yamada K."/>
            <person name="Fujii Y."/>
            <person name="Ozaki K."/>
            <person name="Hirao M."/>
            <person name="Ohmori Y."/>
            <person name="Kawabata A."/>
            <person name="Hikiji T."/>
            <person name="Kobatake N."/>
            <person name="Inagaki H."/>
            <person name="Ikema Y."/>
            <person name="Okamoto S."/>
            <person name="Okitani R."/>
            <person name="Kawakami T."/>
            <person name="Noguchi S."/>
            <person name="Itoh T."/>
            <person name="Shigeta K."/>
            <person name="Senba T."/>
            <person name="Matsumura K."/>
            <person name="Nakajima Y."/>
            <person name="Mizuno T."/>
            <person name="Morinaga M."/>
            <person name="Sasaki M."/>
            <person name="Togashi T."/>
            <person name="Oyama M."/>
            <person name="Hata H."/>
            <person name="Watanabe M."/>
            <person name="Komatsu T."/>
            <person name="Mizushima-Sugano J."/>
            <person name="Satoh T."/>
            <person name="Shirai Y."/>
            <person name="Takahashi Y."/>
            <person name="Nakagawa K."/>
            <person name="Okumura K."/>
            <person name="Nagase T."/>
            <person name="Nomura N."/>
            <person name="Kikuchi H."/>
            <person name="Masuho Y."/>
            <person name="Yamashita R."/>
            <person name="Nakai K."/>
            <person name="Yada T."/>
            <person name="Nakamura Y."/>
            <person name="Ohara O."/>
            <person name="Isogai T."/>
            <person name="Sugano S."/>
        </authorList>
    </citation>
    <scope>NUCLEOTIDE SEQUENCE [LARGE SCALE MRNA] (ISOFORM 2)</scope>
    <source>
        <tissue>Testis</tissue>
    </source>
</reference>
<reference key="2">
    <citation type="journal article" date="2006" name="Nature">
        <title>The DNA sequence, annotation and analysis of human chromosome 3.</title>
        <authorList>
            <person name="Muzny D.M."/>
            <person name="Scherer S.E."/>
            <person name="Kaul R."/>
            <person name="Wang J."/>
            <person name="Yu J."/>
            <person name="Sudbrak R."/>
            <person name="Buhay C.J."/>
            <person name="Chen R."/>
            <person name="Cree A."/>
            <person name="Ding Y."/>
            <person name="Dugan-Rocha S."/>
            <person name="Gill R."/>
            <person name="Gunaratne P."/>
            <person name="Harris R.A."/>
            <person name="Hawes A.C."/>
            <person name="Hernandez J."/>
            <person name="Hodgson A.V."/>
            <person name="Hume J."/>
            <person name="Jackson A."/>
            <person name="Khan Z.M."/>
            <person name="Kovar-Smith C."/>
            <person name="Lewis L.R."/>
            <person name="Lozado R.J."/>
            <person name="Metzker M.L."/>
            <person name="Milosavljevic A."/>
            <person name="Miner G.R."/>
            <person name="Morgan M.B."/>
            <person name="Nazareth L.V."/>
            <person name="Scott G."/>
            <person name="Sodergren E."/>
            <person name="Song X.-Z."/>
            <person name="Steffen D."/>
            <person name="Wei S."/>
            <person name="Wheeler D.A."/>
            <person name="Wright M.W."/>
            <person name="Worley K.C."/>
            <person name="Yuan Y."/>
            <person name="Zhang Z."/>
            <person name="Adams C.Q."/>
            <person name="Ansari-Lari M.A."/>
            <person name="Ayele M."/>
            <person name="Brown M.J."/>
            <person name="Chen G."/>
            <person name="Chen Z."/>
            <person name="Clendenning J."/>
            <person name="Clerc-Blankenburg K.P."/>
            <person name="Chen R."/>
            <person name="Chen Z."/>
            <person name="Davis C."/>
            <person name="Delgado O."/>
            <person name="Dinh H.H."/>
            <person name="Dong W."/>
            <person name="Draper H."/>
            <person name="Ernst S."/>
            <person name="Fu G."/>
            <person name="Gonzalez-Garay M.L."/>
            <person name="Garcia D.K."/>
            <person name="Gillett W."/>
            <person name="Gu J."/>
            <person name="Hao B."/>
            <person name="Haugen E."/>
            <person name="Havlak P."/>
            <person name="He X."/>
            <person name="Hennig S."/>
            <person name="Hu S."/>
            <person name="Huang W."/>
            <person name="Jackson L.R."/>
            <person name="Jacob L.S."/>
            <person name="Kelly S.H."/>
            <person name="Kube M."/>
            <person name="Levy R."/>
            <person name="Li Z."/>
            <person name="Liu B."/>
            <person name="Liu J."/>
            <person name="Liu W."/>
            <person name="Lu J."/>
            <person name="Maheshwari M."/>
            <person name="Nguyen B.-V."/>
            <person name="Okwuonu G.O."/>
            <person name="Palmeiri A."/>
            <person name="Pasternak S."/>
            <person name="Perez L.M."/>
            <person name="Phelps K.A."/>
            <person name="Plopper F.J."/>
            <person name="Qiang B."/>
            <person name="Raymond C."/>
            <person name="Rodriguez R."/>
            <person name="Saenphimmachak C."/>
            <person name="Santibanez J."/>
            <person name="Shen H."/>
            <person name="Shen Y."/>
            <person name="Subramanian S."/>
            <person name="Tabor P.E."/>
            <person name="Verduzco D."/>
            <person name="Waldron L."/>
            <person name="Wang J."/>
            <person name="Wang J."/>
            <person name="Wang Q."/>
            <person name="Williams G.A."/>
            <person name="Wong G.K.-S."/>
            <person name="Yao Z."/>
            <person name="Zhang J."/>
            <person name="Zhang X."/>
            <person name="Zhao G."/>
            <person name="Zhou J."/>
            <person name="Zhou Y."/>
            <person name="Nelson D."/>
            <person name="Lehrach H."/>
            <person name="Reinhardt R."/>
            <person name="Naylor S.L."/>
            <person name="Yang H."/>
            <person name="Olson M."/>
            <person name="Weinstock G."/>
            <person name="Gibbs R.A."/>
        </authorList>
    </citation>
    <scope>NUCLEOTIDE SEQUENCE [LARGE SCALE GENOMIC DNA]</scope>
</reference>
<reference key="3">
    <citation type="journal article" date="2004" name="Genome Res.">
        <title>The status, quality, and expansion of the NIH full-length cDNA project: the Mammalian Gene Collection (MGC).</title>
        <authorList>
            <consortium name="The MGC Project Team"/>
        </authorList>
    </citation>
    <scope>NUCLEOTIDE SEQUENCE [LARGE SCALE MRNA] OF 547-623</scope>
    <source>
        <tissue>Testis</tissue>
    </source>
</reference>
<organism>
    <name type="scientific">Homo sapiens</name>
    <name type="common">Human</name>
    <dbReference type="NCBI Taxonomy" id="9606"/>
    <lineage>
        <taxon>Eukaryota</taxon>
        <taxon>Metazoa</taxon>
        <taxon>Chordata</taxon>
        <taxon>Craniata</taxon>
        <taxon>Vertebrata</taxon>
        <taxon>Euteleostomi</taxon>
        <taxon>Mammalia</taxon>
        <taxon>Eutheria</taxon>
        <taxon>Euarchontoglires</taxon>
        <taxon>Primates</taxon>
        <taxon>Haplorrhini</taxon>
        <taxon>Catarrhini</taxon>
        <taxon>Hominidae</taxon>
        <taxon>Homo</taxon>
    </lineage>
</organism>
<feature type="chain" id="PRO_0000324766" description="Kelch repeat and BTB domain-containing protein 12">
    <location>
        <begin position="1"/>
        <end position="623"/>
    </location>
</feature>
<feature type="domain" description="BTB" evidence="1">
    <location>
        <begin position="31"/>
        <end position="98"/>
    </location>
</feature>
<feature type="domain" description="BACK">
    <location>
        <begin position="133"/>
        <end position="235"/>
    </location>
</feature>
<feature type="repeat" description="Kelch 1">
    <location>
        <begin position="386"/>
        <end position="436"/>
    </location>
</feature>
<feature type="repeat" description="Kelch 2">
    <location>
        <begin position="437"/>
        <end position="492"/>
    </location>
</feature>
<feature type="repeat" description="Kelch 3">
    <location>
        <begin position="494"/>
        <end position="547"/>
    </location>
</feature>
<feature type="repeat" description="Kelch 4">
    <location>
        <begin position="553"/>
        <end position="603"/>
    </location>
</feature>
<feature type="splice variant" id="VSP_032354" description="In isoform 2." evidence="2">
    <location>
        <begin position="1"/>
        <end position="425"/>
    </location>
</feature>
<feature type="splice variant" id="VSP_032355" description="In isoform 2." evidence="2">
    <original>LACHAVVTVNNKLYVIGGWTPQ</original>
    <variation>MIEETSFGKSYAQLNFENSMLW</variation>
    <location>
        <begin position="426"/>
        <end position="447"/>
    </location>
</feature>
<feature type="sequence variant" id="VAR_050055" description="In dbSNP:rs4141499.">
    <original>Q</original>
    <variation>K</variation>
    <location>
        <position position="22"/>
    </location>
</feature>
<feature type="sequence conflict" description="In Ref. 3; AAH41365." evidence="3" ref="3">
    <original>A</original>
    <variation>S</variation>
    <location>
        <position position="547"/>
    </location>
</feature>
<feature type="strand" evidence="4">
    <location>
        <begin position="274"/>
        <end position="280"/>
    </location>
</feature>
<feature type="strand" evidence="4">
    <location>
        <begin position="290"/>
        <end position="292"/>
    </location>
</feature>
<feature type="helix" evidence="4">
    <location>
        <begin position="294"/>
        <end position="296"/>
    </location>
</feature>
<feature type="strand" evidence="4">
    <location>
        <begin position="297"/>
        <end position="302"/>
    </location>
</feature>
<feature type="turn" evidence="4">
    <location>
        <begin position="303"/>
        <end position="306"/>
    </location>
</feature>
<feature type="strand" evidence="4">
    <location>
        <begin position="307"/>
        <end position="312"/>
    </location>
</feature>
<feature type="turn" evidence="4">
    <location>
        <begin position="314"/>
        <end position="318"/>
    </location>
</feature>
<feature type="strand" evidence="4">
    <location>
        <begin position="321"/>
        <end position="328"/>
    </location>
</feature>
<feature type="strand" evidence="4">
    <location>
        <begin position="334"/>
        <end position="339"/>
    </location>
</feature>
<feature type="helix" evidence="4">
    <location>
        <begin position="342"/>
        <end position="346"/>
    </location>
</feature>
<feature type="strand" evidence="4">
    <location>
        <begin position="352"/>
        <end position="373"/>
    </location>
</feature>
<feature type="strand" evidence="4">
    <location>
        <begin position="379"/>
        <end position="383"/>
    </location>
</feature>
<feature type="strand" evidence="4">
    <location>
        <begin position="386"/>
        <end position="390"/>
    </location>
</feature>
<feature type="strand" evidence="4">
    <location>
        <begin position="393"/>
        <end position="396"/>
    </location>
</feature>
<feature type="strand" evidence="4">
    <location>
        <begin position="399"/>
        <end position="402"/>
    </location>
</feature>
<feature type="strand" evidence="4">
    <location>
        <begin position="406"/>
        <end position="410"/>
    </location>
</feature>
<feature type="turn" evidence="4">
    <location>
        <begin position="411"/>
        <end position="414"/>
    </location>
</feature>
<feature type="strand" evidence="4">
    <location>
        <begin position="415"/>
        <end position="419"/>
    </location>
</feature>
<feature type="strand" evidence="4">
    <location>
        <begin position="430"/>
        <end position="434"/>
    </location>
</feature>
<feature type="strand" evidence="4">
    <location>
        <begin position="437"/>
        <end position="441"/>
    </location>
</feature>
<feature type="strand" evidence="4">
    <location>
        <begin position="444"/>
        <end position="446"/>
    </location>
</feature>
<feature type="strand" evidence="4">
    <location>
        <begin position="455"/>
        <end position="458"/>
    </location>
</feature>
<feature type="strand" evidence="4">
    <location>
        <begin position="462"/>
        <end position="466"/>
    </location>
</feature>
<feature type="turn" evidence="4">
    <location>
        <begin position="467"/>
        <end position="470"/>
    </location>
</feature>
<feature type="strand" evidence="4">
    <location>
        <begin position="471"/>
        <end position="475"/>
    </location>
</feature>
<feature type="strand" evidence="4">
    <location>
        <begin position="479"/>
        <end position="484"/>
    </location>
</feature>
<feature type="strand" evidence="4">
    <location>
        <begin position="486"/>
        <end position="490"/>
    </location>
</feature>
<feature type="strand" evidence="4">
    <location>
        <begin position="493"/>
        <end position="497"/>
    </location>
</feature>
<feature type="strand" evidence="4">
    <location>
        <begin position="500"/>
        <end position="505"/>
    </location>
</feature>
<feature type="strand" evidence="4">
    <location>
        <begin position="517"/>
        <end position="521"/>
    </location>
</feature>
<feature type="turn" evidence="4">
    <location>
        <begin position="522"/>
        <end position="525"/>
    </location>
</feature>
<feature type="strand" evidence="4">
    <location>
        <begin position="526"/>
        <end position="530"/>
    </location>
</feature>
<feature type="strand" evidence="4">
    <location>
        <begin position="546"/>
        <end position="550"/>
    </location>
</feature>
<feature type="strand" evidence="4">
    <location>
        <begin position="553"/>
        <end position="557"/>
    </location>
</feature>
<feature type="strand" evidence="4">
    <location>
        <begin position="560"/>
        <end position="562"/>
    </location>
</feature>
<feature type="strand" evidence="4">
    <location>
        <begin position="572"/>
        <end position="577"/>
    </location>
</feature>
<feature type="turn" evidence="4">
    <location>
        <begin position="578"/>
        <end position="581"/>
    </location>
</feature>
<feature type="strand" evidence="4">
    <location>
        <begin position="582"/>
        <end position="589"/>
    </location>
</feature>
<feature type="strand" evidence="4">
    <location>
        <begin position="597"/>
        <end position="604"/>
    </location>
</feature>
<feature type="helix" evidence="4">
    <location>
        <begin position="606"/>
        <end position="608"/>
    </location>
</feature>
<gene>
    <name type="primary">KBTBD12</name>
    <name type="synonym">KLHDC6</name>
</gene>
<keyword id="KW-0002">3D-structure</keyword>
<keyword id="KW-0025">Alternative splicing</keyword>
<keyword id="KW-0880">Kelch repeat</keyword>
<keyword id="KW-1267">Proteomics identification</keyword>
<keyword id="KW-1185">Reference proteome</keyword>
<keyword id="KW-0677">Repeat</keyword>
<proteinExistence type="evidence at protein level"/>
<comment type="alternative products">
    <event type="alternative splicing"/>
    <isoform>
        <id>Q3ZCT8-1</id>
        <name>1</name>
        <sequence type="displayed"/>
    </isoform>
    <isoform>
        <id>Q3ZCT8-2</id>
        <name>2</name>
        <sequence type="described" ref="VSP_032354 VSP_032355"/>
    </isoform>
</comment>
<sequence length="623" mass="71096">MECKIEGKEKYQHSLNLLNKIQNMKELAEMIDVVLTAEGEKFPCHRLVLAAFSPYFKAMFTCGLLECNQREVILYDITAESVSVLLNYMYNAALEINNANVQTVAMAAYFMQMEEVFSVCQKYMMDHMDASNCLGIYYFAKQIGAEDLSDRSKKYLYQHFAEVSLHEEILEIEVHQFLTLIKSDDLNISREESILDLVLRWVNHNKELRTVHLVELLKQVRLELVNPSFLRQALRRNTMLLCDADCVDIIQNAFKAIKTPQQHSLNLRYGMETTSLLLCIGNNSSGIRSRHRSYGDASFCYDPVSRKTYFISSPKYGEGLGTVCTGVVMENNTIIVAGEASASKLSRQKNKNVEIYRYHDRGNQFWEKLCTAEFRELYALGSIHNDLYVIGGQMKIKNQYLITNCVDKYSVERDNWKRVSPLPLQLACHAVVTVNNKLYVIGGWTPQMDLPDEEPDRLSNKLLQYDPSQDQWSVRAPMKYSKYRFSTAVVNSEIYVLGGIGCVGQDKGQVRKCLDVVEIYNPDGDFWREGPPMPSPLLSLRTNSTNAGAVDGKLYVCGGFHGADRHEVISKEILELDPWENQWNVVAINVLMHDSYDVCLVARMNPRDLIPPPSDLVEEGNEH</sequence>
<dbReference type="EMBL" id="AK128176">
    <property type="protein sequence ID" value="BAC87309.1"/>
    <property type="molecule type" value="mRNA"/>
</dbReference>
<dbReference type="EMBL" id="AC011311">
    <property type="status" value="NOT_ANNOTATED_CDS"/>
    <property type="molecule type" value="Genomic_DNA"/>
</dbReference>
<dbReference type="EMBL" id="BC041365">
    <property type="protein sequence ID" value="AAH41365.1"/>
    <property type="molecule type" value="mRNA"/>
</dbReference>
<dbReference type="CCDS" id="CCDS33848.2">
    <molecule id="Q3ZCT8-1"/>
</dbReference>
<dbReference type="RefSeq" id="NP_001357153.1">
    <molecule id="Q3ZCT8-1"/>
    <property type="nucleotide sequence ID" value="NM_001370224.1"/>
</dbReference>
<dbReference type="RefSeq" id="NP_997218.2">
    <molecule id="Q3ZCT8-1"/>
    <property type="nucleotide sequence ID" value="NM_207335.4"/>
</dbReference>
<dbReference type="RefSeq" id="XP_005247224.1">
    <property type="nucleotide sequence ID" value="XM_005247167.1"/>
</dbReference>
<dbReference type="RefSeq" id="XP_005247225.1">
    <property type="nucleotide sequence ID" value="XM_005247168.4"/>
</dbReference>
<dbReference type="RefSeq" id="XP_011510792.1">
    <property type="nucleotide sequence ID" value="XM_011512490.2"/>
</dbReference>
<dbReference type="RefSeq" id="XP_047303545.1">
    <molecule id="Q3ZCT8-1"/>
    <property type="nucleotide sequence ID" value="XM_047447589.1"/>
</dbReference>
<dbReference type="PDB" id="7QZQ">
    <property type="method" value="X-ray"/>
    <property type="resolution" value="1.88 A"/>
    <property type="chains" value="A/B=265-623"/>
</dbReference>
<dbReference type="PDBsum" id="7QZQ"/>
<dbReference type="SMR" id="Q3ZCT8"/>
<dbReference type="BioGRID" id="127926">
    <property type="interactions" value="5"/>
</dbReference>
<dbReference type="STRING" id="9606.ENSP00000385957"/>
<dbReference type="iPTMnet" id="Q3ZCT8"/>
<dbReference type="PhosphoSitePlus" id="Q3ZCT8"/>
<dbReference type="BioMuta" id="KBTBD12"/>
<dbReference type="DMDM" id="172045732"/>
<dbReference type="MassIVE" id="Q3ZCT8"/>
<dbReference type="PaxDb" id="9606-ENSP00000385957"/>
<dbReference type="PeptideAtlas" id="Q3ZCT8"/>
<dbReference type="Antibodypedia" id="52602">
    <property type="antibodies" value="28 antibodies from 10 providers"/>
</dbReference>
<dbReference type="DNASU" id="166348"/>
<dbReference type="Ensembl" id="ENST00000343941.4">
    <molecule id="Q3ZCT8-2"/>
    <property type="protein sequence ID" value="ENSP00000345478.4"/>
    <property type="gene ID" value="ENSG00000187715.13"/>
</dbReference>
<dbReference type="Ensembl" id="ENST00000405109.5">
    <molecule id="Q3ZCT8-1"/>
    <property type="protein sequence ID" value="ENSP00000385957.1"/>
    <property type="gene ID" value="ENSG00000187715.13"/>
</dbReference>
<dbReference type="Ensembl" id="ENST00000405256.5">
    <molecule id="Q3ZCT8-1"/>
    <property type="protein sequence ID" value="ENSP00000385879.1"/>
    <property type="gene ID" value="ENSG00000187715.13"/>
</dbReference>
<dbReference type="GeneID" id="166348"/>
<dbReference type="KEGG" id="hsa:166348"/>
<dbReference type="MANE-Select" id="ENST00000405109.5">
    <property type="protein sequence ID" value="ENSP00000385957.1"/>
    <property type="RefSeq nucleotide sequence ID" value="NM_207335.4"/>
    <property type="RefSeq protein sequence ID" value="NP_997218.2"/>
</dbReference>
<dbReference type="UCSC" id="uc003eka.5">
    <molecule id="Q3ZCT8-1"/>
    <property type="organism name" value="human"/>
</dbReference>
<dbReference type="AGR" id="HGNC:25731"/>
<dbReference type="CTD" id="166348"/>
<dbReference type="DisGeNET" id="166348"/>
<dbReference type="GeneCards" id="KBTBD12"/>
<dbReference type="HGNC" id="HGNC:25731">
    <property type="gene designation" value="KBTBD12"/>
</dbReference>
<dbReference type="HPA" id="ENSG00000187715">
    <property type="expression patterns" value="Tissue enhanced (skeletal muscle, tongue)"/>
</dbReference>
<dbReference type="neXtProt" id="NX_Q3ZCT8"/>
<dbReference type="OpenTargets" id="ENSG00000187715"/>
<dbReference type="PharmGKB" id="PA165697420"/>
<dbReference type="VEuPathDB" id="HostDB:ENSG00000187715"/>
<dbReference type="eggNOG" id="KOG4441">
    <property type="taxonomic scope" value="Eukaryota"/>
</dbReference>
<dbReference type="GeneTree" id="ENSGT00940000156836"/>
<dbReference type="HOGENOM" id="CLU_004253_14_2_1"/>
<dbReference type="InParanoid" id="Q3ZCT8"/>
<dbReference type="OMA" id="DYWRDGP"/>
<dbReference type="OrthoDB" id="45365at2759"/>
<dbReference type="PAN-GO" id="Q3ZCT8">
    <property type="GO annotations" value="0 GO annotations based on evolutionary models"/>
</dbReference>
<dbReference type="PhylomeDB" id="Q3ZCT8"/>
<dbReference type="TreeFam" id="TF351656"/>
<dbReference type="PathwayCommons" id="Q3ZCT8"/>
<dbReference type="BioGRID-ORCS" id="166348">
    <property type="hits" value="14 hits in 1196 CRISPR screens"/>
</dbReference>
<dbReference type="ChiTaRS" id="KBTBD12">
    <property type="organism name" value="human"/>
</dbReference>
<dbReference type="GenomeRNAi" id="166348"/>
<dbReference type="Pharos" id="Q3ZCT8">
    <property type="development level" value="Tdark"/>
</dbReference>
<dbReference type="PRO" id="PR:Q3ZCT8"/>
<dbReference type="Proteomes" id="UP000005640">
    <property type="component" value="Chromosome 3"/>
</dbReference>
<dbReference type="RNAct" id="Q3ZCT8">
    <property type="molecule type" value="protein"/>
</dbReference>
<dbReference type="Bgee" id="ENSG00000187715">
    <property type="expression patterns" value="Expressed in tibialis anterior and 119 other cell types or tissues"/>
</dbReference>
<dbReference type="ExpressionAtlas" id="Q3ZCT8">
    <property type="expression patterns" value="baseline and differential"/>
</dbReference>
<dbReference type="GO" id="GO:0031463">
    <property type="term" value="C:Cul3-RING ubiquitin ligase complex"/>
    <property type="evidence" value="ECO:0000318"/>
    <property type="project" value="GO_Central"/>
</dbReference>
<dbReference type="GO" id="GO:0005737">
    <property type="term" value="C:cytoplasm"/>
    <property type="evidence" value="ECO:0000318"/>
    <property type="project" value="GO_Central"/>
</dbReference>
<dbReference type="GO" id="GO:1990756">
    <property type="term" value="F:ubiquitin-like ligase-substrate adaptor activity"/>
    <property type="evidence" value="ECO:0000318"/>
    <property type="project" value="GO_Central"/>
</dbReference>
<dbReference type="GO" id="GO:0043161">
    <property type="term" value="P:proteasome-mediated ubiquitin-dependent protein catabolic process"/>
    <property type="evidence" value="ECO:0000318"/>
    <property type="project" value="GO_Central"/>
</dbReference>
<dbReference type="CDD" id="cd18485">
    <property type="entry name" value="BACK_KBTBD12"/>
    <property type="match status" value="1"/>
</dbReference>
<dbReference type="CDD" id="cd18276">
    <property type="entry name" value="BTB_POZ_KBTBD12"/>
    <property type="match status" value="1"/>
</dbReference>
<dbReference type="FunFam" id="1.25.40.420:FF:000001">
    <property type="entry name" value="Kelch-like family member 12"/>
    <property type="match status" value="1"/>
</dbReference>
<dbReference type="Gene3D" id="1.25.40.420">
    <property type="match status" value="1"/>
</dbReference>
<dbReference type="Gene3D" id="2.120.10.80">
    <property type="entry name" value="Kelch-type beta propeller"/>
    <property type="match status" value="1"/>
</dbReference>
<dbReference type="Gene3D" id="3.30.710.10">
    <property type="entry name" value="Potassium Channel Kv1.1, Chain A"/>
    <property type="match status" value="1"/>
</dbReference>
<dbReference type="InterPro" id="IPR011705">
    <property type="entry name" value="BACK"/>
</dbReference>
<dbReference type="InterPro" id="IPR017096">
    <property type="entry name" value="BTB-kelch_protein"/>
</dbReference>
<dbReference type="InterPro" id="IPR000210">
    <property type="entry name" value="BTB/POZ_dom"/>
</dbReference>
<dbReference type="InterPro" id="IPR015915">
    <property type="entry name" value="Kelch-typ_b-propeller"/>
</dbReference>
<dbReference type="InterPro" id="IPR006652">
    <property type="entry name" value="Kelch_1"/>
</dbReference>
<dbReference type="InterPro" id="IPR011333">
    <property type="entry name" value="SKP1/BTB/POZ_sf"/>
</dbReference>
<dbReference type="PANTHER" id="PTHR24412">
    <property type="entry name" value="KELCH PROTEIN"/>
    <property type="match status" value="1"/>
</dbReference>
<dbReference type="PANTHER" id="PTHR24412:SF491">
    <property type="entry name" value="KELCH REPEAT AND BTB DOMAIN-CONTAINING PROTEIN 12"/>
    <property type="match status" value="1"/>
</dbReference>
<dbReference type="Pfam" id="PF07707">
    <property type="entry name" value="BACK"/>
    <property type="match status" value="1"/>
</dbReference>
<dbReference type="Pfam" id="PF00651">
    <property type="entry name" value="BTB"/>
    <property type="match status" value="1"/>
</dbReference>
<dbReference type="Pfam" id="PF24681">
    <property type="entry name" value="Kelch_KLHDC2_KLHL20_DRC7"/>
    <property type="match status" value="1"/>
</dbReference>
<dbReference type="PIRSF" id="PIRSF037037">
    <property type="entry name" value="Kelch-like_protein_gigaxonin"/>
    <property type="match status" value="1"/>
</dbReference>
<dbReference type="SMART" id="SM00875">
    <property type="entry name" value="BACK"/>
    <property type="match status" value="1"/>
</dbReference>
<dbReference type="SMART" id="SM00225">
    <property type="entry name" value="BTB"/>
    <property type="match status" value="1"/>
</dbReference>
<dbReference type="SMART" id="SM00612">
    <property type="entry name" value="Kelch"/>
    <property type="match status" value="4"/>
</dbReference>
<dbReference type="SUPFAM" id="SSF117281">
    <property type="entry name" value="Kelch motif"/>
    <property type="match status" value="1"/>
</dbReference>
<dbReference type="SUPFAM" id="SSF54695">
    <property type="entry name" value="POZ domain"/>
    <property type="match status" value="1"/>
</dbReference>
<dbReference type="PROSITE" id="PS50097">
    <property type="entry name" value="BTB"/>
    <property type="match status" value="1"/>
</dbReference>
<protein>
    <recommendedName>
        <fullName>Kelch repeat and BTB domain-containing protein 12</fullName>
    </recommendedName>
    <alternativeName>
        <fullName>Kelch domain-containing protein 6</fullName>
    </alternativeName>
</protein>